<sequence>MTNIRKSHPLMKIVNNAFIDLPAPSNISSWWNFGSLLGICLILQILTGLFLAMHYTSDTTTAFSSVTHICRDVNYGWIIRYMHANGASMFFICLYMHVGRGLYYGSYTFLETWNIGVILLLTVMATAFMGYVLPWGQMSFWGATVITNLLSAIPYIGTNLVEWIWGGFSVDKATLTRFFAFHFILPFIIMAIAMVHLLFLHETGSNNPTGISSDVDKIPFHPYYTIKDILGALLLILALMLLVLFAPDLLGDPDNYTPANPLNTPPHIKPEWYFLFAYAILRSIPNKLGGVLALAFSILILALIPLLHTSKQRSMMFRPLSQCLFWALVADLLTLTWIGGQPVEHPYITIGQLASILYFLLILVLMPTAGTVENKLLKW</sequence>
<accession>Q8HCJ4</accession>
<protein>
    <recommendedName>
        <fullName>Cytochrome b</fullName>
    </recommendedName>
    <alternativeName>
        <fullName>Complex III subunit 3</fullName>
    </alternativeName>
    <alternativeName>
        <fullName>Complex III subunit III</fullName>
    </alternativeName>
    <alternativeName>
        <fullName>Cytochrome b-c1 complex subunit 3</fullName>
    </alternativeName>
    <alternativeName>
        <fullName>Ubiquinol-cytochrome-c reductase complex cytochrome b subunit</fullName>
    </alternativeName>
</protein>
<geneLocation type="mitochondrion"/>
<feature type="chain" id="PRO_0000253510" description="Cytochrome b">
    <location>
        <begin position="1"/>
        <end position="379"/>
    </location>
</feature>
<feature type="transmembrane region" description="Helical" evidence="2">
    <location>
        <begin position="33"/>
        <end position="53"/>
    </location>
</feature>
<feature type="transmembrane region" description="Helical" evidence="2">
    <location>
        <begin position="77"/>
        <end position="98"/>
    </location>
</feature>
<feature type="transmembrane region" description="Helical" evidence="2">
    <location>
        <begin position="113"/>
        <end position="133"/>
    </location>
</feature>
<feature type="transmembrane region" description="Helical" evidence="2">
    <location>
        <begin position="178"/>
        <end position="198"/>
    </location>
</feature>
<feature type="transmembrane region" description="Helical" evidence="2">
    <location>
        <begin position="226"/>
        <end position="246"/>
    </location>
</feature>
<feature type="transmembrane region" description="Helical" evidence="2">
    <location>
        <begin position="288"/>
        <end position="308"/>
    </location>
</feature>
<feature type="transmembrane region" description="Helical" evidence="2">
    <location>
        <begin position="320"/>
        <end position="340"/>
    </location>
</feature>
<feature type="transmembrane region" description="Helical" evidence="2">
    <location>
        <begin position="347"/>
        <end position="367"/>
    </location>
</feature>
<feature type="binding site" description="axial binding residue" evidence="2">
    <location>
        <position position="83"/>
    </location>
    <ligand>
        <name>heme b</name>
        <dbReference type="ChEBI" id="CHEBI:60344"/>
        <label>b562</label>
    </ligand>
    <ligandPart>
        <name>Fe</name>
        <dbReference type="ChEBI" id="CHEBI:18248"/>
    </ligandPart>
</feature>
<feature type="binding site" description="axial binding residue" evidence="2">
    <location>
        <position position="97"/>
    </location>
    <ligand>
        <name>heme b</name>
        <dbReference type="ChEBI" id="CHEBI:60344"/>
        <label>b566</label>
    </ligand>
    <ligandPart>
        <name>Fe</name>
        <dbReference type="ChEBI" id="CHEBI:18248"/>
    </ligandPart>
</feature>
<feature type="binding site" description="axial binding residue" evidence="2">
    <location>
        <position position="182"/>
    </location>
    <ligand>
        <name>heme b</name>
        <dbReference type="ChEBI" id="CHEBI:60344"/>
        <label>b562</label>
    </ligand>
    <ligandPart>
        <name>Fe</name>
        <dbReference type="ChEBI" id="CHEBI:18248"/>
    </ligandPart>
</feature>
<feature type="binding site" description="axial binding residue" evidence="2">
    <location>
        <position position="196"/>
    </location>
    <ligand>
        <name>heme b</name>
        <dbReference type="ChEBI" id="CHEBI:60344"/>
        <label>b566</label>
    </ligand>
    <ligandPart>
        <name>Fe</name>
        <dbReference type="ChEBI" id="CHEBI:18248"/>
    </ligandPart>
</feature>
<feature type="binding site" evidence="2">
    <location>
        <position position="201"/>
    </location>
    <ligand>
        <name>a ubiquinone</name>
        <dbReference type="ChEBI" id="CHEBI:16389"/>
    </ligand>
</feature>
<keyword id="KW-0249">Electron transport</keyword>
<keyword id="KW-0349">Heme</keyword>
<keyword id="KW-0408">Iron</keyword>
<keyword id="KW-0472">Membrane</keyword>
<keyword id="KW-0479">Metal-binding</keyword>
<keyword id="KW-0496">Mitochondrion</keyword>
<keyword id="KW-0999">Mitochondrion inner membrane</keyword>
<keyword id="KW-1185">Reference proteome</keyword>
<keyword id="KW-0679">Respiratory chain</keyword>
<keyword id="KW-0812">Transmembrane</keyword>
<keyword id="KW-1133">Transmembrane helix</keyword>
<keyword id="KW-0813">Transport</keyword>
<keyword id="KW-0830">Ubiquinone</keyword>
<gene>
    <name type="primary">MT-CYB</name>
    <name type="synonym">COB</name>
    <name type="synonym">CYTB</name>
    <name type="synonym">MTCYB</name>
</gene>
<reference key="1">
    <citation type="journal article" date="2002" name="Genetics">
        <title>Coexistence of Bos taurus and B. indicus mitochondrial DNAs in nuclear transfer-derived somatic cattle clones.</title>
        <authorList>
            <person name="Steinborn R."/>
            <person name="Schinogl P."/>
            <person name="Wells D.N."/>
            <person name="Bergthaler A."/>
            <person name="Mueller M."/>
            <person name="Brem G."/>
        </authorList>
    </citation>
    <scope>NUCLEOTIDE SEQUENCE [GENOMIC DNA]</scope>
    <source>
        <strain>Isolate E1</strain>
        <strain>Isolate E4</strain>
        <strain>Isolate Elisabeth</strain>
    </source>
</reference>
<reference key="2">
    <citation type="submission" date="2002-07" db="EMBL/GenBank/DDBJ databases">
        <authorList>
            <person name="Xuebin Q."/>
            <person name="Jianlin H."/>
            <person name="Hanotte O."/>
            <person name="Rege J.E.O."/>
        </authorList>
    </citation>
    <scope>NUCLEOTIDE SEQUENCE [GENOMIC DNA]</scope>
    <source>
        <strain>Isolate Ongole ON2270</strain>
        <tissue>Blood</tissue>
    </source>
</reference>
<reference key="3">
    <citation type="journal article" date="2004" name="Mol. Phylogenet. Evol.">
        <title>Molecular phylogeny of the tribe Bovini (Bovidae, Bovinae) and the taxonomic status of the Kouprey, Bos sauveli Urbain 1937.</title>
        <authorList>
            <person name="Hassanin A."/>
            <person name="Ropiquet A."/>
        </authorList>
    </citation>
    <scope>NUCLEOTIDE SEQUENCE [GENOMIC DNA]</scope>
</reference>
<reference key="4">
    <citation type="submission" date="2002-03" db="EMBL/GenBank/DDBJ databases">
        <title>Complete sequence of the Bos indicus mitochondrial genome.</title>
        <authorList>
            <person name="Hiendleder S."/>
            <person name="Lewalski H."/>
            <person name="Wolf E."/>
        </authorList>
    </citation>
    <scope>NUCLEOTIDE SEQUENCE [GENOMIC DNA]</scope>
    <source>
        <tissue>Liver</tissue>
    </source>
</reference>
<reference key="5">
    <citation type="submission" date="2002-06" db="EMBL/GenBank/DDBJ databases">
        <title>The complete mitochondrial genome nucleotide sequence of Bos indicus.</title>
        <authorList>
            <person name="Miretti M.M."/>
            <person name="Pereira H.A. Jr."/>
            <person name="Greggio C."/>
            <person name="Suzuki J. Jr."/>
            <person name="Ferro J.A."/>
            <person name="Ferro M.I."/>
            <person name="Meirelles F."/>
            <person name="Garcia J.M."/>
            <person name="Smith L.C."/>
        </authorList>
    </citation>
    <scope>NUCLEOTIDE SEQUENCE [GENOMIC DNA]</scope>
</reference>
<organism>
    <name type="scientific">Bos indicus</name>
    <name type="common">Zebu</name>
    <dbReference type="NCBI Taxonomy" id="9915"/>
    <lineage>
        <taxon>Eukaryota</taxon>
        <taxon>Metazoa</taxon>
        <taxon>Chordata</taxon>
        <taxon>Craniata</taxon>
        <taxon>Vertebrata</taxon>
        <taxon>Euteleostomi</taxon>
        <taxon>Mammalia</taxon>
        <taxon>Eutheria</taxon>
        <taxon>Laurasiatheria</taxon>
        <taxon>Artiodactyla</taxon>
        <taxon>Ruminantia</taxon>
        <taxon>Pecora</taxon>
        <taxon>Bovidae</taxon>
        <taxon>Bovinae</taxon>
        <taxon>Bos</taxon>
    </lineage>
</organism>
<evidence type="ECO:0000250" key="1"/>
<evidence type="ECO:0000250" key="2">
    <source>
        <dbReference type="UniProtKB" id="P00157"/>
    </source>
</evidence>
<evidence type="ECO:0000255" key="3">
    <source>
        <dbReference type="PROSITE-ProRule" id="PRU00967"/>
    </source>
</evidence>
<evidence type="ECO:0000255" key="4">
    <source>
        <dbReference type="PROSITE-ProRule" id="PRU00968"/>
    </source>
</evidence>
<proteinExistence type="inferred from homology"/>
<dbReference type="EMBL" id="AF419237">
    <property type="protein sequence ID" value="AAL57481.2"/>
    <property type="molecule type" value="Genomic_DNA"/>
</dbReference>
<dbReference type="EMBL" id="AF531473">
    <property type="protein sequence ID" value="AAO15014.1"/>
    <property type="molecule type" value="Genomic_DNA"/>
</dbReference>
<dbReference type="EMBL" id="AY689190">
    <property type="protein sequence ID" value="AAV51240.1"/>
    <property type="molecule type" value="Genomic_DNA"/>
</dbReference>
<dbReference type="EMBL" id="AF492350">
    <property type="protein sequence ID" value="AAQ06592.1"/>
    <property type="molecule type" value="Genomic_DNA"/>
</dbReference>
<dbReference type="EMBL" id="AY126697">
    <property type="protein sequence ID" value="AAM95742.1"/>
    <property type="molecule type" value="Genomic_DNA"/>
</dbReference>
<dbReference type="RefSeq" id="YP_052709.1">
    <property type="nucleotide sequence ID" value="NC_005971.1"/>
</dbReference>
<dbReference type="SMR" id="Q8HCJ4"/>
<dbReference type="GeneID" id="2885974"/>
<dbReference type="KEGG" id="biu:2885974"/>
<dbReference type="CTD" id="4519"/>
<dbReference type="OrthoDB" id="37773at91561"/>
<dbReference type="Proteomes" id="UP000515132">
    <property type="component" value="Mitochondrion MT"/>
</dbReference>
<dbReference type="GO" id="GO:0005743">
    <property type="term" value="C:mitochondrial inner membrane"/>
    <property type="evidence" value="ECO:0007669"/>
    <property type="project" value="UniProtKB-SubCell"/>
</dbReference>
<dbReference type="GO" id="GO:0045275">
    <property type="term" value="C:respiratory chain complex III"/>
    <property type="evidence" value="ECO:0007669"/>
    <property type="project" value="InterPro"/>
</dbReference>
<dbReference type="GO" id="GO:0046872">
    <property type="term" value="F:metal ion binding"/>
    <property type="evidence" value="ECO:0007669"/>
    <property type="project" value="UniProtKB-KW"/>
</dbReference>
<dbReference type="GO" id="GO:0008121">
    <property type="term" value="F:ubiquinol-cytochrome-c reductase activity"/>
    <property type="evidence" value="ECO:0007669"/>
    <property type="project" value="InterPro"/>
</dbReference>
<dbReference type="GO" id="GO:0006122">
    <property type="term" value="P:mitochondrial electron transport, ubiquinol to cytochrome c"/>
    <property type="evidence" value="ECO:0007669"/>
    <property type="project" value="TreeGrafter"/>
</dbReference>
<dbReference type="CDD" id="cd00290">
    <property type="entry name" value="cytochrome_b_C"/>
    <property type="match status" value="1"/>
</dbReference>
<dbReference type="CDD" id="cd00284">
    <property type="entry name" value="Cytochrome_b_N"/>
    <property type="match status" value="1"/>
</dbReference>
<dbReference type="FunFam" id="1.20.810.10:FF:000002">
    <property type="entry name" value="Cytochrome b"/>
    <property type="match status" value="1"/>
</dbReference>
<dbReference type="Gene3D" id="1.20.810.10">
    <property type="entry name" value="Cytochrome Bc1 Complex, Chain C"/>
    <property type="match status" value="1"/>
</dbReference>
<dbReference type="InterPro" id="IPR005798">
    <property type="entry name" value="Cyt_b/b6_C"/>
</dbReference>
<dbReference type="InterPro" id="IPR036150">
    <property type="entry name" value="Cyt_b/b6_C_sf"/>
</dbReference>
<dbReference type="InterPro" id="IPR005797">
    <property type="entry name" value="Cyt_b/b6_N"/>
</dbReference>
<dbReference type="InterPro" id="IPR027387">
    <property type="entry name" value="Cytb/b6-like_sf"/>
</dbReference>
<dbReference type="InterPro" id="IPR030689">
    <property type="entry name" value="Cytochrome_b"/>
</dbReference>
<dbReference type="InterPro" id="IPR048260">
    <property type="entry name" value="Cytochrome_b_C_euk/bac"/>
</dbReference>
<dbReference type="InterPro" id="IPR048259">
    <property type="entry name" value="Cytochrome_b_N_euk/bac"/>
</dbReference>
<dbReference type="InterPro" id="IPR016174">
    <property type="entry name" value="Di-haem_cyt_TM"/>
</dbReference>
<dbReference type="PANTHER" id="PTHR19271">
    <property type="entry name" value="CYTOCHROME B"/>
    <property type="match status" value="1"/>
</dbReference>
<dbReference type="PANTHER" id="PTHR19271:SF16">
    <property type="entry name" value="CYTOCHROME B"/>
    <property type="match status" value="1"/>
</dbReference>
<dbReference type="Pfam" id="PF00032">
    <property type="entry name" value="Cytochrom_B_C"/>
    <property type="match status" value="1"/>
</dbReference>
<dbReference type="Pfam" id="PF00033">
    <property type="entry name" value="Cytochrome_B"/>
    <property type="match status" value="1"/>
</dbReference>
<dbReference type="PIRSF" id="PIRSF038885">
    <property type="entry name" value="COB"/>
    <property type="match status" value="1"/>
</dbReference>
<dbReference type="SUPFAM" id="SSF81648">
    <property type="entry name" value="a domain/subunit of cytochrome bc1 complex (Ubiquinol-cytochrome c reductase)"/>
    <property type="match status" value="1"/>
</dbReference>
<dbReference type="SUPFAM" id="SSF81342">
    <property type="entry name" value="Transmembrane di-heme cytochromes"/>
    <property type="match status" value="1"/>
</dbReference>
<dbReference type="PROSITE" id="PS51003">
    <property type="entry name" value="CYTB_CTER"/>
    <property type="match status" value="1"/>
</dbReference>
<dbReference type="PROSITE" id="PS51002">
    <property type="entry name" value="CYTB_NTER"/>
    <property type="match status" value="1"/>
</dbReference>
<name>CYB_BOSIN</name>
<comment type="function">
    <text evidence="2">Component of the ubiquinol-cytochrome c reductase complex (complex III or cytochrome b-c1 complex) that is part of the mitochondrial respiratory chain. The b-c1 complex mediates electron transfer from ubiquinol to cytochrome c. Contributes to the generation of a proton gradient across the mitochondrial membrane that is then used for ATP synthesis.</text>
</comment>
<comment type="cofactor">
    <cofactor evidence="2">
        <name>heme b</name>
        <dbReference type="ChEBI" id="CHEBI:60344"/>
    </cofactor>
    <text evidence="2">Binds 2 heme b groups non-covalently.</text>
</comment>
<comment type="subunit">
    <text evidence="2">The cytochrome bc1 complex contains 11 subunits: 3 respiratory subunits (MT-CYB, CYC1 and UQCRFS1), 2 core proteins (UQCRC1 and UQCRC2) and 6 low-molecular weight proteins (UQCRH/QCR6, UQCRB/QCR7, UQCRQ/QCR8, UQCR10/QCR9, UQCR11/QCR10 and a cleavage product of UQCRFS1). This cytochrome bc1 complex then forms a dimer.</text>
</comment>
<comment type="subcellular location">
    <subcellularLocation>
        <location evidence="2">Mitochondrion inner membrane</location>
        <topology evidence="2">Multi-pass membrane protein</topology>
    </subcellularLocation>
</comment>
<comment type="miscellaneous">
    <text evidence="1">Heme 1 (or BL or b562) is low-potential and absorbs at about 562 nm, and heme 2 (or BH or b566) is high-potential and absorbs at about 566 nm.</text>
</comment>
<comment type="similarity">
    <text evidence="3 4">Belongs to the cytochrome b family.</text>
</comment>
<comment type="caution">
    <text evidence="2">The full-length protein contains only eight transmembrane helices, not nine as predicted by bioinformatics tools.</text>
</comment>